<comment type="function">
    <text evidence="1">Core subunit of the mitochondrial membrane respiratory chain NADH dehydrogenase (Complex I) that is believed to belong to the minimal assembly required for catalysis. Complex I functions in the transfer of electrons from NADH to the respiratory chain. The immediate electron acceptor for the enzyme is believed to be ubiquinone (By similarity).</text>
</comment>
<comment type="catalytic activity">
    <reaction>
        <text>a ubiquinone + NADH + 5 H(+)(in) = a ubiquinol + NAD(+) + 4 H(+)(out)</text>
        <dbReference type="Rhea" id="RHEA:29091"/>
        <dbReference type="Rhea" id="RHEA-COMP:9565"/>
        <dbReference type="Rhea" id="RHEA-COMP:9566"/>
        <dbReference type="ChEBI" id="CHEBI:15378"/>
        <dbReference type="ChEBI" id="CHEBI:16389"/>
        <dbReference type="ChEBI" id="CHEBI:17976"/>
        <dbReference type="ChEBI" id="CHEBI:57540"/>
        <dbReference type="ChEBI" id="CHEBI:57945"/>
        <dbReference type="EC" id="7.1.1.2"/>
    </reaction>
</comment>
<comment type="subcellular location">
    <subcellularLocation>
        <location evidence="1">Mitochondrion inner membrane</location>
        <topology evidence="1">Multi-pass membrane protein</topology>
    </subcellularLocation>
</comment>
<comment type="similarity">
    <text evidence="3">Belongs to the complex I subunit 1 family.</text>
</comment>
<feature type="chain" id="PRO_0000117459" description="NADH-ubiquinone oxidoreductase chain 1">
    <location>
        <begin position="1"/>
        <end position="367"/>
    </location>
</feature>
<feature type="transmembrane region" description="Helical" evidence="2">
    <location>
        <begin position="5"/>
        <end position="25"/>
    </location>
</feature>
<feature type="transmembrane region" description="Helical" evidence="2">
    <location>
        <begin position="43"/>
        <end position="63"/>
    </location>
</feature>
<feature type="transmembrane region" description="Helical" evidence="2">
    <location>
        <begin position="74"/>
        <end position="94"/>
    </location>
</feature>
<feature type="transmembrane region" description="Helical" evidence="2">
    <location>
        <begin position="108"/>
        <end position="128"/>
    </location>
</feature>
<feature type="transmembrane region" description="Helical" evidence="2">
    <location>
        <begin position="152"/>
        <end position="172"/>
    </location>
</feature>
<feature type="transmembrane region" description="Helical" evidence="2">
    <location>
        <begin position="179"/>
        <end position="199"/>
    </location>
</feature>
<feature type="transmembrane region" description="Helical" evidence="2">
    <location>
        <begin position="225"/>
        <end position="245"/>
    </location>
</feature>
<feature type="transmembrane region" description="Helical" evidence="2">
    <location>
        <begin position="265"/>
        <end position="285"/>
    </location>
</feature>
<feature type="transmembrane region" description="Helical" evidence="2">
    <location>
        <begin position="301"/>
        <end position="321"/>
    </location>
</feature>
<feature type="transmembrane region" description="Helical" evidence="2">
    <location>
        <begin position="336"/>
        <end position="356"/>
    </location>
</feature>
<reference key="1">
    <citation type="journal article" date="1988" name="Curr. Genet.">
        <title>DNA sequence and organization of the mitochondrial ND1 gene from Podospora anserina: analysis of alternate splice sites.</title>
        <authorList>
            <person name="Cummings D.J."/>
            <person name="Domenico J.M."/>
            <person name="Michel F."/>
        </authorList>
    </citation>
    <scope>NUCLEOTIDE SEQUENCE [GENOMIC DNA]</scope>
    <source>
        <strain>A</strain>
        <strain>s</strain>
    </source>
</reference>
<reference key="2">
    <citation type="journal article" date="1990" name="Curr. Genet.">
        <title>The complete DNA sequence of the mitochondrial genome of Podospora anserina.</title>
        <authorList>
            <person name="Cummings D.J."/>
            <person name="McNally K.L."/>
            <person name="Domenico J.M."/>
            <person name="Matsuura E.T."/>
        </authorList>
    </citation>
    <scope>NUCLEOTIDE SEQUENCE [LARGE SCALE GENOMIC DNA]</scope>
    <source>
        <strain>s</strain>
    </source>
</reference>
<keyword id="KW-0249">Electron transport</keyword>
<keyword id="KW-0472">Membrane</keyword>
<keyword id="KW-0496">Mitochondrion</keyword>
<keyword id="KW-0999">Mitochondrion inner membrane</keyword>
<keyword id="KW-0520">NAD</keyword>
<keyword id="KW-1185">Reference proteome</keyword>
<keyword id="KW-0679">Respiratory chain</keyword>
<keyword id="KW-1278">Translocase</keyword>
<keyword id="KW-0812">Transmembrane</keyword>
<keyword id="KW-1133">Transmembrane helix</keyword>
<keyword id="KW-0813">Transport</keyword>
<keyword id="KW-0830">Ubiquinone</keyword>
<accession>P19041</accession>
<sequence>MYYSIIISLIEVVLVLVPALLGIAYVTIAERKTMASMQRRLGPNFVGYYGLLQAFADALKLLLKEYVAPTQANIILFFLGPVITLIFSLLGYAVIPYGPSLAINDFSLGIYYILAVSSLATYGILLAGWSANSKYAFLGSLRSTAQLISYELVLSSAILLVIMLTGSLNLSVNIESQRAIWNIFPLLPVFIIFFIGSVAETNRAPFDLAEAESELVSGFMTEHAAVVFVFFFLAEYGSIVLMCILTSILFLGGYLSINSLDVFNFFYSILFNIGFIDLNFFNIFYYFYKEIFVNNSIIEGLIYGLTIGLKSSILIFLFIWVRASFPRIRFDQLMAFCWTVLLPLLFALIVLLPCILYSYNILPVNVL</sequence>
<protein>
    <recommendedName>
        <fullName>NADH-ubiquinone oxidoreductase chain 1</fullName>
        <ecNumber>7.1.1.2</ecNumber>
    </recommendedName>
    <alternativeName>
        <fullName>NADH dehydrogenase subunit 1</fullName>
    </alternativeName>
</protein>
<gene>
    <name type="primary">ND1</name>
</gene>
<geneLocation type="mitochondrion"/>
<proteinExistence type="inferred from homology"/>
<name>NU1M_PODAN</name>
<evidence type="ECO:0000250" key="1"/>
<evidence type="ECO:0000255" key="2"/>
<evidence type="ECO:0000305" key="3"/>
<dbReference type="EC" id="7.1.1.2"/>
<dbReference type="EMBL" id="X55026">
    <property type="protein sequence ID" value="CAA38809.1"/>
    <property type="molecule type" value="Genomic_DNA"/>
</dbReference>
<dbReference type="EMBL" id="X13164">
    <property type="protein sequence ID" value="CAA31563.1"/>
    <property type="status" value="ALT_SEQ"/>
    <property type="molecule type" value="Genomic_DNA"/>
</dbReference>
<dbReference type="PIR" id="S06058">
    <property type="entry name" value="S06058"/>
</dbReference>
<dbReference type="SMR" id="P19041"/>
<dbReference type="STRING" id="515849.P19041"/>
<dbReference type="KEGG" id="pan:PoanfMp49"/>
<dbReference type="InParanoid" id="P19041"/>
<dbReference type="Proteomes" id="UP000001197">
    <property type="component" value="Mitochondrion"/>
</dbReference>
<dbReference type="GO" id="GO:0005743">
    <property type="term" value="C:mitochondrial inner membrane"/>
    <property type="evidence" value="ECO:0007669"/>
    <property type="project" value="UniProtKB-SubCell"/>
</dbReference>
<dbReference type="GO" id="GO:0008137">
    <property type="term" value="F:NADH dehydrogenase (ubiquinone) activity"/>
    <property type="evidence" value="ECO:0007669"/>
    <property type="project" value="UniProtKB-EC"/>
</dbReference>
<dbReference type="GO" id="GO:0009060">
    <property type="term" value="P:aerobic respiration"/>
    <property type="evidence" value="ECO:0007669"/>
    <property type="project" value="TreeGrafter"/>
</dbReference>
<dbReference type="HAMAP" id="MF_01350">
    <property type="entry name" value="NDH1_NuoH"/>
    <property type="match status" value="1"/>
</dbReference>
<dbReference type="InterPro" id="IPR001694">
    <property type="entry name" value="NADH_UbQ_OxRdtase_su1/FPO"/>
</dbReference>
<dbReference type="InterPro" id="IPR018086">
    <property type="entry name" value="NADH_UbQ_OxRdtase_su1_CS"/>
</dbReference>
<dbReference type="PANTHER" id="PTHR11432">
    <property type="entry name" value="NADH DEHYDROGENASE SUBUNIT 1"/>
    <property type="match status" value="1"/>
</dbReference>
<dbReference type="PANTHER" id="PTHR11432:SF3">
    <property type="entry name" value="NADH-UBIQUINONE OXIDOREDUCTASE CHAIN 1"/>
    <property type="match status" value="1"/>
</dbReference>
<dbReference type="Pfam" id="PF00146">
    <property type="entry name" value="NADHdh"/>
    <property type="match status" value="1"/>
</dbReference>
<dbReference type="PROSITE" id="PS00667">
    <property type="entry name" value="COMPLEX1_ND1_1"/>
    <property type="match status" value="1"/>
</dbReference>
<dbReference type="PROSITE" id="PS00668">
    <property type="entry name" value="COMPLEX1_ND1_2"/>
    <property type="match status" value="1"/>
</dbReference>
<organism>
    <name type="scientific">Podospora anserina (strain S / ATCC MYA-4624 / DSM 980 / FGSC 10383)</name>
    <name type="common">Pleurage anserina</name>
    <dbReference type="NCBI Taxonomy" id="515849"/>
    <lineage>
        <taxon>Eukaryota</taxon>
        <taxon>Fungi</taxon>
        <taxon>Dikarya</taxon>
        <taxon>Ascomycota</taxon>
        <taxon>Pezizomycotina</taxon>
        <taxon>Sordariomycetes</taxon>
        <taxon>Sordariomycetidae</taxon>
        <taxon>Sordariales</taxon>
        <taxon>Podosporaceae</taxon>
        <taxon>Podospora</taxon>
        <taxon>Podospora anserina</taxon>
    </lineage>
</organism>